<proteinExistence type="inferred from homology"/>
<sequence>MTDHDNQRWLQLWRERRTDFHQHGVNLLLSRFWPAFAPATPSRVFVPLCGKSLDMLWLAEQGHDVIGVELSPLAIEAFFRENHLPPSKRRQGRFTLWRHGRIGILCGDYFALSEADLGPVDSVYDRAALTALPPILRSRYVAQLRRIVPDTARVFLLTLEDAEADATLQQALGVDEELAALYTAGFEIALAHVESLFEPDPQNGAPRRVEHKVYQLTGKRPASPEADGRAAETED</sequence>
<comment type="catalytic activity">
    <reaction evidence="1">
        <text>S-adenosyl-L-methionine + a thiopurine = S-adenosyl-L-homocysteine + a thiopurine S-methylether.</text>
        <dbReference type="EC" id="2.1.1.67"/>
    </reaction>
</comment>
<comment type="subcellular location">
    <subcellularLocation>
        <location evidence="1">Cytoplasm</location>
    </subcellularLocation>
</comment>
<comment type="similarity">
    <text evidence="1">Belongs to the class I-like SAM-binding methyltransferase superfamily. TPMT family.</text>
</comment>
<comment type="sequence caution" evidence="3">
    <conflict type="erroneous initiation">
        <sequence resource="EMBL-CDS" id="CAC44176"/>
    </conflict>
</comment>
<organism>
    <name type="scientific">Stutzerimonas stutzeri (strain A1501)</name>
    <name type="common">Pseudomonas stutzeri</name>
    <dbReference type="NCBI Taxonomy" id="379731"/>
    <lineage>
        <taxon>Bacteria</taxon>
        <taxon>Pseudomonadati</taxon>
        <taxon>Pseudomonadota</taxon>
        <taxon>Gammaproteobacteria</taxon>
        <taxon>Pseudomonadales</taxon>
        <taxon>Pseudomonadaceae</taxon>
        <taxon>Stutzerimonas</taxon>
    </lineage>
</organism>
<keyword id="KW-0963">Cytoplasm</keyword>
<keyword id="KW-0489">Methyltransferase</keyword>
<keyword id="KW-1185">Reference proteome</keyword>
<keyword id="KW-0949">S-adenosyl-L-methionine</keyword>
<keyword id="KW-0808">Transferase</keyword>
<feature type="chain" id="PRO_0000220131" description="Thiopurine S-methyltransferase">
    <location>
        <begin position="1"/>
        <end position="235"/>
    </location>
</feature>
<feature type="region of interest" description="Disordered" evidence="2">
    <location>
        <begin position="199"/>
        <end position="235"/>
    </location>
</feature>
<feature type="compositionally biased region" description="Basic and acidic residues" evidence="2">
    <location>
        <begin position="226"/>
        <end position="235"/>
    </location>
</feature>
<feature type="binding site" evidence="1">
    <location>
        <position position="13"/>
    </location>
    <ligand>
        <name>S-adenosyl-L-methionine</name>
        <dbReference type="ChEBI" id="CHEBI:59789"/>
    </ligand>
</feature>
<feature type="binding site" evidence="1">
    <location>
        <position position="48"/>
    </location>
    <ligand>
        <name>S-adenosyl-L-methionine</name>
        <dbReference type="ChEBI" id="CHEBI:59789"/>
    </ligand>
</feature>
<feature type="binding site" evidence="1">
    <location>
        <position position="69"/>
    </location>
    <ligand>
        <name>S-adenosyl-L-methionine</name>
        <dbReference type="ChEBI" id="CHEBI:59789"/>
    </ligand>
</feature>
<feature type="binding site" evidence="1">
    <location>
        <position position="126"/>
    </location>
    <ligand>
        <name>S-adenosyl-L-methionine</name>
        <dbReference type="ChEBI" id="CHEBI:59789"/>
    </ligand>
</feature>
<gene>
    <name evidence="1" type="primary">tpm</name>
    <name type="synonym">tmpA</name>
    <name type="ordered locus">PST_1312</name>
</gene>
<reference key="1">
    <citation type="journal article" date="2003" name="Microbiology">
        <title>Nitrogen fixation genetics and regulation in a Pseudomonas stutzeri strain associated with rice.</title>
        <authorList>
            <person name="Desnoues N."/>
            <person name="Lin M."/>
            <person name="Guo X."/>
            <person name="Ma L."/>
            <person name="Carreno-Lopez R."/>
            <person name="Elmerich C."/>
        </authorList>
    </citation>
    <scope>NUCLEOTIDE SEQUENCE [GENOMIC DNA]</scope>
</reference>
<reference key="2">
    <citation type="journal article" date="2008" name="Proc. Natl. Acad. Sci. U.S.A.">
        <title>Nitrogen fixation island and rhizosphere competence traits in the genome of root-associated Pseudomonas stutzeri A1501.</title>
        <authorList>
            <person name="Yan Y."/>
            <person name="Yang J."/>
            <person name="Dou Y."/>
            <person name="Chen M."/>
            <person name="Ping S."/>
            <person name="Peng J."/>
            <person name="Lu W."/>
            <person name="Zhang W."/>
            <person name="Yao Z."/>
            <person name="Li H."/>
            <person name="Liu W."/>
            <person name="He S."/>
            <person name="Geng L."/>
            <person name="Zhang X."/>
            <person name="Yang F."/>
            <person name="Yu H."/>
            <person name="Zhan Y."/>
            <person name="Li D."/>
            <person name="Lin Z."/>
            <person name="Wang Y."/>
            <person name="Elmerich C."/>
            <person name="Lin M."/>
            <person name="Jin Q."/>
        </authorList>
    </citation>
    <scope>NUCLEOTIDE SEQUENCE [LARGE SCALE GENOMIC DNA]</scope>
    <source>
        <strain>A1501</strain>
    </source>
</reference>
<protein>
    <recommendedName>
        <fullName evidence="1">Thiopurine S-methyltransferase</fullName>
        <ecNumber evidence="1">2.1.1.67</ecNumber>
    </recommendedName>
    <alternativeName>
        <fullName evidence="1">Thiopurine methyltransferase</fullName>
    </alternativeName>
</protein>
<dbReference type="EC" id="2.1.1.67" evidence="1"/>
<dbReference type="EMBL" id="AJ297529">
    <property type="protein sequence ID" value="CAC44176.3"/>
    <property type="status" value="ALT_INIT"/>
    <property type="molecule type" value="Genomic_DNA"/>
</dbReference>
<dbReference type="EMBL" id="CP000304">
    <property type="protein sequence ID" value="ABP79007.1"/>
    <property type="molecule type" value="Genomic_DNA"/>
</dbReference>
<dbReference type="RefSeq" id="WP_011912491.1">
    <property type="nucleotide sequence ID" value="NC_009434.1"/>
</dbReference>
<dbReference type="SMR" id="Q93JT2"/>
<dbReference type="KEGG" id="psa:PST_1312"/>
<dbReference type="eggNOG" id="COG2265">
    <property type="taxonomic scope" value="Bacteria"/>
</dbReference>
<dbReference type="HOGENOM" id="CLU_085515_1_0_6"/>
<dbReference type="Proteomes" id="UP000000233">
    <property type="component" value="Chromosome"/>
</dbReference>
<dbReference type="GO" id="GO:0005737">
    <property type="term" value="C:cytoplasm"/>
    <property type="evidence" value="ECO:0007669"/>
    <property type="project" value="UniProtKB-SubCell"/>
</dbReference>
<dbReference type="GO" id="GO:0008119">
    <property type="term" value="F:thiopurine S-methyltransferase activity"/>
    <property type="evidence" value="ECO:0007669"/>
    <property type="project" value="UniProtKB-UniRule"/>
</dbReference>
<dbReference type="GO" id="GO:0032259">
    <property type="term" value="P:methylation"/>
    <property type="evidence" value="ECO:0007669"/>
    <property type="project" value="UniProtKB-KW"/>
</dbReference>
<dbReference type="CDD" id="cd02440">
    <property type="entry name" value="AdoMet_MTases"/>
    <property type="match status" value="1"/>
</dbReference>
<dbReference type="FunFam" id="3.40.50.150:FF:000101">
    <property type="entry name" value="Thiopurine S-methyltransferase"/>
    <property type="match status" value="1"/>
</dbReference>
<dbReference type="Gene3D" id="3.40.50.150">
    <property type="entry name" value="Vaccinia Virus protein VP39"/>
    <property type="match status" value="1"/>
</dbReference>
<dbReference type="HAMAP" id="MF_00812">
    <property type="entry name" value="Thiopur_methtran"/>
    <property type="match status" value="1"/>
</dbReference>
<dbReference type="InterPro" id="IPR029063">
    <property type="entry name" value="SAM-dependent_MTases_sf"/>
</dbReference>
<dbReference type="InterPro" id="IPR025835">
    <property type="entry name" value="Thiopurine_S-MeTrfase"/>
</dbReference>
<dbReference type="InterPro" id="IPR008854">
    <property type="entry name" value="TPMT"/>
</dbReference>
<dbReference type="NCBIfam" id="NF009732">
    <property type="entry name" value="PRK13255.1"/>
    <property type="match status" value="1"/>
</dbReference>
<dbReference type="PANTHER" id="PTHR10259">
    <property type="entry name" value="THIOPURINE S-METHYLTRANSFERASE"/>
    <property type="match status" value="1"/>
</dbReference>
<dbReference type="PANTHER" id="PTHR10259:SF11">
    <property type="entry name" value="THIOPURINE S-METHYLTRANSFERASE"/>
    <property type="match status" value="1"/>
</dbReference>
<dbReference type="Pfam" id="PF05724">
    <property type="entry name" value="TPMT"/>
    <property type="match status" value="1"/>
</dbReference>
<dbReference type="PIRSF" id="PIRSF023956">
    <property type="entry name" value="Thiopurine_S-methyltransferase"/>
    <property type="match status" value="1"/>
</dbReference>
<dbReference type="SUPFAM" id="SSF53335">
    <property type="entry name" value="S-adenosyl-L-methionine-dependent methyltransferases"/>
    <property type="match status" value="1"/>
</dbReference>
<dbReference type="PROSITE" id="PS51585">
    <property type="entry name" value="SAM_MT_TPMT"/>
    <property type="match status" value="1"/>
</dbReference>
<evidence type="ECO:0000255" key="1">
    <source>
        <dbReference type="HAMAP-Rule" id="MF_00812"/>
    </source>
</evidence>
<evidence type="ECO:0000256" key="2">
    <source>
        <dbReference type="SAM" id="MobiDB-lite"/>
    </source>
</evidence>
<evidence type="ECO:0000305" key="3"/>
<accession>Q93JT2</accession>
<accession>A4VJ56</accession>
<name>TPMT_STUS1</name>